<comment type="function">
    <text evidence="2">Factor Xa is a vitamin K-dependent glycoprotein that converts prothrombin to thrombin in the presence of factor Va, calcium and phospholipid during blood clotting. Factor Xa activates pro-inflammatory signaling pathways in a protease-activated receptor (PAR)-dependent manner (By similarity).</text>
</comment>
<comment type="catalytic activity">
    <reaction>
        <text>Selective cleavage of Arg-|-Thr and then Arg-|-Ile bonds in prothrombin to form thrombin.</text>
        <dbReference type="EC" id="3.4.21.6"/>
    </reaction>
</comment>
<comment type="activity regulation">
    <text evidence="1">Inhibited by SERPINA5.</text>
</comment>
<comment type="subunit">
    <text evidence="1">The two chains are formed from a single-chain precursor by the excision of two Arg residues and are held together by 1 or more disulfide bonds. Forms a heterodimer with SERPINA5 (By similarity).</text>
</comment>
<comment type="subcellular location">
    <subcellularLocation>
        <location evidence="1">Secreted</location>
    </subcellularLocation>
</comment>
<comment type="PTM">
    <text evidence="1">The vitamin K-dependent, enzymatic carboxylation of some glutamate residues allows the modified protein to bind calcium.</text>
</comment>
<comment type="PTM">
    <text evidence="1">N- and O-glycosylated.</text>
</comment>
<comment type="PTM">
    <text evidence="2 3">Proteolytically cleaved and activated by cathepsin CTSG (By similarity). The activation peptide is cleaved by factor IXa (in the intrinsic pathway), or by factor VIIa (in the extrinsic pathway) (By similarity).</text>
</comment>
<comment type="PTM">
    <text evidence="1">The iron and 2-oxoglutarate dependent 3-hydroxylation of aspartate and asparagine is (R) stereospecific within EGF domains.</text>
</comment>
<comment type="miscellaneous">
    <text>Calcium also binds, with stronger affinity to another site, beyond the GLA domain.</text>
</comment>
<comment type="similarity">
    <text evidence="6">Belongs to the peptidase S1 family.</text>
</comment>
<sequence>MANPLHLVLLGAALAGLLLSGSSVFISRRAANDVLARTRRANSFLEELKKGNLERECMEENCSYEEALEVFEDREKTNEFWNKYVDGDQCESNPCQNQGTCKDGLGMYTCSCVEGYEGQDCEPVTRKLCSLDNGGCDQFCKEEENSVLCSCASGYTLGDNGKSCISTELFPCGKVTLGRWRRSPATNSSEGPPEAPGPEQQDDGNLTATENPFNLLDSPEPPPEDDSSSLVRIVGGQDCRDGECPWQALLVNEENEGFCGGTILSEYHVLTAAHCLHQAKRFKVRVGDRDTEHEEGNEETHEVEVVVKHNRFVKETYDFDIAVLRLKTPITFRRNVAPACLPQKDWAESTLMAQKTGIVSGFGRTHEMGRLSTTLKMLEVPYVDRNSCKRSSSFTITQNMFCAGYDARPEDACQGDSGGPHVTRFRDTYFVTGIVSWGEGCARKGKFGVYTKVSNFLKWIEKSMRARAVPVAEAAGTPGPTQPTIKGSPS</sequence>
<gene>
    <name type="primary">F10</name>
</gene>
<feature type="signal peptide" evidence="4">
    <location>
        <begin position="1"/>
        <end position="20"/>
    </location>
</feature>
<feature type="propeptide" id="PRO_0000027798" evidence="1">
    <location>
        <begin position="21"/>
        <end position="40"/>
    </location>
</feature>
<feature type="chain" id="PRO_0000027799" description="Coagulation factor X">
    <location>
        <begin position="41"/>
        <end position="490"/>
    </location>
</feature>
<feature type="chain" id="PRO_0000027800" description="Factor X light chain">
    <location>
        <begin position="41"/>
        <end position="180"/>
    </location>
</feature>
<feature type="chain" id="PRO_0000027801" description="Factor X heavy chain">
    <location>
        <begin position="184"/>
        <end position="490"/>
    </location>
</feature>
<feature type="propeptide" id="PRO_0000027802" description="Activation peptide">
    <location>
        <begin position="184"/>
        <end position="232"/>
    </location>
</feature>
<feature type="chain" id="PRO_0000027803" description="Activated factor Xa heavy chain">
    <location>
        <begin position="233"/>
        <end position="490"/>
    </location>
</feature>
<feature type="domain" description="Gla" evidence="7">
    <location>
        <begin position="41"/>
        <end position="85"/>
    </location>
</feature>
<feature type="domain" description="EGF-like 1; calcium-binding" evidence="5">
    <location>
        <begin position="86"/>
        <end position="122"/>
    </location>
</feature>
<feature type="domain" description="EGF-like 2" evidence="5">
    <location>
        <begin position="125"/>
        <end position="165"/>
    </location>
</feature>
<feature type="domain" description="Peptidase S1" evidence="6">
    <location>
        <begin position="233"/>
        <end position="465"/>
    </location>
</feature>
<feature type="region of interest" description="Disordered" evidence="8">
    <location>
        <begin position="183"/>
        <end position="230"/>
    </location>
</feature>
<feature type="compositionally biased region" description="Polar residues" evidence="8">
    <location>
        <begin position="203"/>
        <end position="212"/>
    </location>
</feature>
<feature type="active site" description="Charge relay system">
    <location>
        <position position="274"/>
    </location>
</feature>
<feature type="active site" description="Charge relay system">
    <location>
        <position position="320"/>
    </location>
</feature>
<feature type="active site" description="Charge relay system">
    <location>
        <position position="417"/>
    </location>
</feature>
<feature type="modified residue" description="4-carboxyglutamate" evidence="3 7">
    <location>
        <position position="46"/>
    </location>
</feature>
<feature type="modified residue" description="4-carboxyglutamate" evidence="3 7">
    <location>
        <position position="47"/>
    </location>
</feature>
<feature type="modified residue" description="4-carboxyglutamate" evidence="3 7">
    <location>
        <position position="54"/>
    </location>
</feature>
<feature type="modified residue" description="4-carboxyglutamate" evidence="3 7">
    <location>
        <position position="56"/>
    </location>
</feature>
<feature type="modified residue" description="4-carboxyglutamate" evidence="3 7">
    <location>
        <position position="59"/>
    </location>
</feature>
<feature type="modified residue" description="4-carboxyglutamate" evidence="3 7">
    <location>
        <position position="60"/>
    </location>
</feature>
<feature type="modified residue" description="4-carboxyglutamate" evidence="3 7">
    <location>
        <position position="65"/>
    </location>
</feature>
<feature type="modified residue" description="4-carboxyglutamate" evidence="3 7">
    <location>
        <position position="66"/>
    </location>
</feature>
<feature type="modified residue" description="4-carboxyglutamate" evidence="3 7">
    <location>
        <position position="69"/>
    </location>
</feature>
<feature type="modified residue" description="4-carboxyglutamate" evidence="3 7">
    <location>
        <position position="72"/>
    </location>
</feature>
<feature type="modified residue" description="4-carboxyglutamate" evidence="3 7">
    <location>
        <position position="75"/>
    </location>
</feature>
<feature type="modified residue" description="4-carboxyglutamate" evidence="3 7">
    <location>
        <position position="79"/>
    </location>
</feature>
<feature type="modified residue" description="(3R)-3-hydroxyaspartate" evidence="1">
    <location>
        <position position="103"/>
    </location>
</feature>
<feature type="glycosylation site" description="N-linked (GlcNAc...) asparagine" evidence="4">
    <location>
        <position position="61"/>
    </location>
</feature>
<feature type="glycosylation site" description="N-linked (GlcNAc...) asparagine" evidence="4">
    <location>
        <position position="187"/>
    </location>
</feature>
<feature type="glycosylation site" description="N-linked (GlcNAc...) asparagine" evidence="4">
    <location>
        <position position="205"/>
    </location>
</feature>
<feature type="disulfide bond" evidence="1">
    <location>
        <begin position="57"/>
        <end position="62"/>
    </location>
</feature>
<feature type="disulfide bond" evidence="1">
    <location>
        <begin position="90"/>
        <end position="101"/>
    </location>
</feature>
<feature type="disulfide bond" evidence="1">
    <location>
        <begin position="95"/>
        <end position="110"/>
    </location>
</feature>
<feature type="disulfide bond" evidence="1">
    <location>
        <begin position="112"/>
        <end position="121"/>
    </location>
</feature>
<feature type="disulfide bond" evidence="1">
    <location>
        <begin position="129"/>
        <end position="140"/>
    </location>
</feature>
<feature type="disulfide bond" evidence="1">
    <location>
        <begin position="136"/>
        <end position="149"/>
    </location>
</feature>
<feature type="disulfide bond" evidence="1">
    <location>
        <begin position="151"/>
        <end position="164"/>
    </location>
</feature>
<feature type="disulfide bond" description="Interchain (between light and heavy chains)" evidence="5 6 7">
    <location>
        <begin position="172"/>
        <end position="340"/>
    </location>
</feature>
<feature type="disulfide bond" evidence="1">
    <location>
        <begin position="239"/>
        <end position="244"/>
    </location>
</feature>
<feature type="disulfide bond" evidence="1">
    <location>
        <begin position="259"/>
        <end position="275"/>
    </location>
</feature>
<feature type="disulfide bond" evidence="1">
    <location>
        <begin position="388"/>
        <end position="402"/>
    </location>
</feature>
<feature type="disulfide bond" evidence="1">
    <location>
        <begin position="413"/>
        <end position="441"/>
    </location>
</feature>
<proteinExistence type="evidence at transcript level"/>
<organism>
    <name type="scientific">Oryctolagus cuniculus</name>
    <name type="common">Rabbit</name>
    <dbReference type="NCBI Taxonomy" id="9986"/>
    <lineage>
        <taxon>Eukaryota</taxon>
        <taxon>Metazoa</taxon>
        <taxon>Chordata</taxon>
        <taxon>Craniata</taxon>
        <taxon>Vertebrata</taxon>
        <taxon>Euteleostomi</taxon>
        <taxon>Mammalia</taxon>
        <taxon>Eutheria</taxon>
        <taxon>Euarchontoglires</taxon>
        <taxon>Glires</taxon>
        <taxon>Lagomorpha</taxon>
        <taxon>Leporidae</taxon>
        <taxon>Oryctolagus</taxon>
    </lineage>
</organism>
<reference key="1">
    <citation type="journal article" date="1997" name="Thromb. Res.">
        <title>Characterization of a full-length cDNA for rabbit factor X.</title>
        <authorList>
            <person name="Pendurthi U.R."/>
            <person name="Anderson K.D."/>
            <person name="James H.L."/>
        </authorList>
    </citation>
    <scope>NUCLEOTIDE SEQUENCE [MRNA]</scope>
</reference>
<keyword id="KW-0094">Blood coagulation</keyword>
<keyword id="KW-0106">Calcium</keyword>
<keyword id="KW-0165">Cleavage on pair of basic residues</keyword>
<keyword id="KW-1015">Disulfide bond</keyword>
<keyword id="KW-0245">EGF-like domain</keyword>
<keyword id="KW-0301">Gamma-carboxyglutamic acid</keyword>
<keyword id="KW-0325">Glycoprotein</keyword>
<keyword id="KW-0356">Hemostasis</keyword>
<keyword id="KW-0378">Hydrolase</keyword>
<keyword id="KW-0379">Hydroxylation</keyword>
<keyword id="KW-0645">Protease</keyword>
<keyword id="KW-1185">Reference proteome</keyword>
<keyword id="KW-0677">Repeat</keyword>
<keyword id="KW-0964">Secreted</keyword>
<keyword id="KW-0720">Serine protease</keyword>
<keyword id="KW-0732">Signal</keyword>
<keyword id="KW-0865">Zymogen</keyword>
<accession>O19045</accession>
<evidence type="ECO:0000250" key="1"/>
<evidence type="ECO:0000250" key="2">
    <source>
        <dbReference type="UniProtKB" id="P00742"/>
    </source>
</evidence>
<evidence type="ECO:0000250" key="3">
    <source>
        <dbReference type="UniProtKB" id="P00743"/>
    </source>
</evidence>
<evidence type="ECO:0000255" key="4"/>
<evidence type="ECO:0000255" key="5">
    <source>
        <dbReference type="PROSITE-ProRule" id="PRU00076"/>
    </source>
</evidence>
<evidence type="ECO:0000255" key="6">
    <source>
        <dbReference type="PROSITE-ProRule" id="PRU00274"/>
    </source>
</evidence>
<evidence type="ECO:0000255" key="7">
    <source>
        <dbReference type="PROSITE-ProRule" id="PRU00463"/>
    </source>
</evidence>
<evidence type="ECO:0000256" key="8">
    <source>
        <dbReference type="SAM" id="MobiDB-lite"/>
    </source>
</evidence>
<name>FA10_RABIT</name>
<dbReference type="EC" id="3.4.21.6"/>
<dbReference type="EMBL" id="AF003200">
    <property type="protein sequence ID" value="AAB62542.1"/>
    <property type="molecule type" value="mRNA"/>
</dbReference>
<dbReference type="RefSeq" id="NP_001075485.1">
    <property type="nucleotide sequence ID" value="NM_001082016.1"/>
</dbReference>
<dbReference type="SMR" id="O19045"/>
<dbReference type="FunCoup" id="O19045">
    <property type="interactions" value="39"/>
</dbReference>
<dbReference type="STRING" id="9986.ENSOCUP00000025032"/>
<dbReference type="BindingDB" id="O19045"/>
<dbReference type="ChEMBL" id="CHEMBL5062"/>
<dbReference type="DrugCentral" id="O19045"/>
<dbReference type="MEROPS" id="S01.216"/>
<dbReference type="GlyCosmos" id="O19045">
    <property type="glycosylation" value="3 sites, No reported glycans"/>
</dbReference>
<dbReference type="PaxDb" id="9986-ENSOCUP00000025032"/>
<dbReference type="GeneID" id="100008647"/>
<dbReference type="KEGG" id="ocu:100008647"/>
<dbReference type="CTD" id="2159"/>
<dbReference type="eggNOG" id="ENOG502QS4N">
    <property type="taxonomic scope" value="Eukaryota"/>
</dbReference>
<dbReference type="InParanoid" id="O19045"/>
<dbReference type="OrthoDB" id="6380398at2759"/>
<dbReference type="PRO" id="PR:O19045"/>
<dbReference type="Proteomes" id="UP000001811">
    <property type="component" value="Unplaced"/>
</dbReference>
<dbReference type="GO" id="GO:0005615">
    <property type="term" value="C:extracellular space"/>
    <property type="evidence" value="ECO:0007669"/>
    <property type="project" value="TreeGrafter"/>
</dbReference>
<dbReference type="GO" id="GO:0005509">
    <property type="term" value="F:calcium ion binding"/>
    <property type="evidence" value="ECO:0007669"/>
    <property type="project" value="InterPro"/>
</dbReference>
<dbReference type="GO" id="GO:0004252">
    <property type="term" value="F:serine-type endopeptidase activity"/>
    <property type="evidence" value="ECO:0007669"/>
    <property type="project" value="UniProtKB-EC"/>
</dbReference>
<dbReference type="GO" id="GO:0007596">
    <property type="term" value="P:blood coagulation"/>
    <property type="evidence" value="ECO:0007669"/>
    <property type="project" value="UniProtKB-KW"/>
</dbReference>
<dbReference type="GO" id="GO:0006508">
    <property type="term" value="P:proteolysis"/>
    <property type="evidence" value="ECO:0007669"/>
    <property type="project" value="UniProtKB-KW"/>
</dbReference>
<dbReference type="CDD" id="cd00054">
    <property type="entry name" value="EGF_CA"/>
    <property type="match status" value="1"/>
</dbReference>
<dbReference type="CDD" id="cd00190">
    <property type="entry name" value="Tryp_SPc"/>
    <property type="match status" value="1"/>
</dbReference>
<dbReference type="FunFam" id="2.10.25.10:FF:000443">
    <property type="entry name" value="Coagulation factor X"/>
    <property type="match status" value="1"/>
</dbReference>
<dbReference type="FunFam" id="2.40.10.10:FF:000013">
    <property type="entry name" value="Coagulation factor X"/>
    <property type="match status" value="1"/>
</dbReference>
<dbReference type="FunFam" id="2.10.25.10:FF:000162">
    <property type="entry name" value="Coagulation factor X (Predicted)"/>
    <property type="match status" value="1"/>
</dbReference>
<dbReference type="FunFam" id="4.10.740.10:FF:000001">
    <property type="entry name" value="vitamin K-dependent protein S"/>
    <property type="match status" value="1"/>
</dbReference>
<dbReference type="Gene3D" id="4.10.740.10">
    <property type="entry name" value="Coagulation Factor IX"/>
    <property type="match status" value="1"/>
</dbReference>
<dbReference type="Gene3D" id="2.10.25.10">
    <property type="entry name" value="Laminin"/>
    <property type="match status" value="2"/>
</dbReference>
<dbReference type="Gene3D" id="2.40.10.10">
    <property type="entry name" value="Trypsin-like serine proteases"/>
    <property type="match status" value="2"/>
</dbReference>
<dbReference type="InterPro" id="IPR017857">
    <property type="entry name" value="Coagulation_fac-like_Gla_dom"/>
</dbReference>
<dbReference type="InterPro" id="IPR001881">
    <property type="entry name" value="EGF-like_Ca-bd_dom"/>
</dbReference>
<dbReference type="InterPro" id="IPR000742">
    <property type="entry name" value="EGF-like_dom"/>
</dbReference>
<dbReference type="InterPro" id="IPR000152">
    <property type="entry name" value="EGF-type_Asp/Asn_hydroxyl_site"/>
</dbReference>
<dbReference type="InterPro" id="IPR018097">
    <property type="entry name" value="EGF_Ca-bd_CS"/>
</dbReference>
<dbReference type="InterPro" id="IPR035972">
    <property type="entry name" value="GLA-like_dom_SF"/>
</dbReference>
<dbReference type="InterPro" id="IPR000294">
    <property type="entry name" value="GLA_domain"/>
</dbReference>
<dbReference type="InterPro" id="IPR012224">
    <property type="entry name" value="Pept_S1A_FX"/>
</dbReference>
<dbReference type="InterPro" id="IPR050442">
    <property type="entry name" value="Peptidase_S1_coag_factors"/>
</dbReference>
<dbReference type="InterPro" id="IPR009003">
    <property type="entry name" value="Peptidase_S1_PA"/>
</dbReference>
<dbReference type="InterPro" id="IPR043504">
    <property type="entry name" value="Peptidase_S1_PA_chymotrypsin"/>
</dbReference>
<dbReference type="InterPro" id="IPR001314">
    <property type="entry name" value="Peptidase_S1A"/>
</dbReference>
<dbReference type="InterPro" id="IPR001254">
    <property type="entry name" value="Trypsin_dom"/>
</dbReference>
<dbReference type="InterPro" id="IPR018114">
    <property type="entry name" value="TRYPSIN_HIS"/>
</dbReference>
<dbReference type="InterPro" id="IPR033116">
    <property type="entry name" value="TRYPSIN_SER"/>
</dbReference>
<dbReference type="PANTHER" id="PTHR24278">
    <property type="entry name" value="COAGULATION FACTOR"/>
    <property type="match status" value="1"/>
</dbReference>
<dbReference type="PANTHER" id="PTHR24278:SF28">
    <property type="entry name" value="COAGULATION FACTOR X"/>
    <property type="match status" value="1"/>
</dbReference>
<dbReference type="Pfam" id="PF00008">
    <property type="entry name" value="EGF"/>
    <property type="match status" value="1"/>
</dbReference>
<dbReference type="Pfam" id="PF14670">
    <property type="entry name" value="FXa_inhibition"/>
    <property type="match status" value="1"/>
</dbReference>
<dbReference type="Pfam" id="PF00594">
    <property type="entry name" value="Gla"/>
    <property type="match status" value="1"/>
</dbReference>
<dbReference type="Pfam" id="PF00089">
    <property type="entry name" value="Trypsin"/>
    <property type="match status" value="1"/>
</dbReference>
<dbReference type="PIRSF" id="PIRSF001143">
    <property type="entry name" value="Factor_X"/>
    <property type="match status" value="1"/>
</dbReference>
<dbReference type="PRINTS" id="PR00722">
    <property type="entry name" value="CHYMOTRYPSIN"/>
</dbReference>
<dbReference type="PRINTS" id="PR00010">
    <property type="entry name" value="EGFBLOOD"/>
</dbReference>
<dbReference type="PRINTS" id="PR00001">
    <property type="entry name" value="GLABLOOD"/>
</dbReference>
<dbReference type="SMART" id="SM00181">
    <property type="entry name" value="EGF"/>
    <property type="match status" value="2"/>
</dbReference>
<dbReference type="SMART" id="SM00179">
    <property type="entry name" value="EGF_CA"/>
    <property type="match status" value="1"/>
</dbReference>
<dbReference type="SMART" id="SM00069">
    <property type="entry name" value="GLA"/>
    <property type="match status" value="1"/>
</dbReference>
<dbReference type="SMART" id="SM00020">
    <property type="entry name" value="Tryp_SPc"/>
    <property type="match status" value="1"/>
</dbReference>
<dbReference type="SUPFAM" id="SSF57630">
    <property type="entry name" value="GLA-domain"/>
    <property type="match status" value="1"/>
</dbReference>
<dbReference type="SUPFAM" id="SSF50494">
    <property type="entry name" value="Trypsin-like serine proteases"/>
    <property type="match status" value="1"/>
</dbReference>
<dbReference type="PROSITE" id="PS00010">
    <property type="entry name" value="ASX_HYDROXYL"/>
    <property type="match status" value="1"/>
</dbReference>
<dbReference type="PROSITE" id="PS00022">
    <property type="entry name" value="EGF_1"/>
    <property type="match status" value="1"/>
</dbReference>
<dbReference type="PROSITE" id="PS01186">
    <property type="entry name" value="EGF_2"/>
    <property type="match status" value="2"/>
</dbReference>
<dbReference type="PROSITE" id="PS50026">
    <property type="entry name" value="EGF_3"/>
    <property type="match status" value="1"/>
</dbReference>
<dbReference type="PROSITE" id="PS01187">
    <property type="entry name" value="EGF_CA"/>
    <property type="match status" value="1"/>
</dbReference>
<dbReference type="PROSITE" id="PS00011">
    <property type="entry name" value="GLA_1"/>
    <property type="match status" value="1"/>
</dbReference>
<dbReference type="PROSITE" id="PS50998">
    <property type="entry name" value="GLA_2"/>
    <property type="match status" value="1"/>
</dbReference>
<dbReference type="PROSITE" id="PS50240">
    <property type="entry name" value="TRYPSIN_DOM"/>
    <property type="match status" value="1"/>
</dbReference>
<dbReference type="PROSITE" id="PS00134">
    <property type="entry name" value="TRYPSIN_HIS"/>
    <property type="match status" value="1"/>
</dbReference>
<dbReference type="PROSITE" id="PS00135">
    <property type="entry name" value="TRYPSIN_SER"/>
    <property type="match status" value="1"/>
</dbReference>
<protein>
    <recommendedName>
        <fullName>Coagulation factor X</fullName>
        <ecNumber>3.4.21.6</ecNumber>
    </recommendedName>
    <alternativeName>
        <fullName>Stuart factor</fullName>
    </alternativeName>
    <component>
        <recommendedName>
            <fullName>Factor X light chain</fullName>
        </recommendedName>
    </component>
    <component>
        <recommendedName>
            <fullName>Factor X heavy chain</fullName>
        </recommendedName>
    </component>
    <component>
        <recommendedName>
            <fullName>Activated factor Xa heavy chain</fullName>
        </recommendedName>
    </component>
</protein>